<protein>
    <recommendedName>
        <fullName evidence="1">Acetyl-coenzyme A carboxylase carboxyl transferase subunit alpha</fullName>
        <shortName evidence="1">ACCase subunit alpha</shortName>
        <shortName evidence="1">Acetyl-CoA carboxylase carboxyltransferase subunit alpha</shortName>
        <ecNumber evidence="1">2.1.3.15</ecNumber>
    </recommendedName>
</protein>
<reference key="1">
    <citation type="submission" date="2003-03" db="EMBL/GenBank/DDBJ databases">
        <title>The complete genome sequence of Neisseria gonorrhoeae.</title>
        <authorList>
            <person name="Lewis L.A."/>
            <person name="Gillaspy A.F."/>
            <person name="McLaughlin R.E."/>
            <person name="Gipson M."/>
            <person name="Ducey T.F."/>
            <person name="Ownbey T."/>
            <person name="Hartman K."/>
            <person name="Nydick C."/>
            <person name="Carson M.B."/>
            <person name="Vaughn J."/>
            <person name="Thomson C."/>
            <person name="Song L."/>
            <person name="Lin S."/>
            <person name="Yuan X."/>
            <person name="Najar F."/>
            <person name="Zhan M."/>
            <person name="Ren Q."/>
            <person name="Zhu H."/>
            <person name="Qi S."/>
            <person name="Kenton S.M."/>
            <person name="Lai H."/>
            <person name="White J.D."/>
            <person name="Clifton S."/>
            <person name="Roe B.A."/>
            <person name="Dyer D.W."/>
        </authorList>
    </citation>
    <scope>NUCLEOTIDE SEQUENCE [LARGE SCALE GENOMIC DNA]</scope>
    <source>
        <strain>ATCC 700825 / FA 1090</strain>
    </source>
</reference>
<keyword id="KW-0067">ATP-binding</keyword>
<keyword id="KW-0963">Cytoplasm</keyword>
<keyword id="KW-0275">Fatty acid biosynthesis</keyword>
<keyword id="KW-0276">Fatty acid metabolism</keyword>
<keyword id="KW-0444">Lipid biosynthesis</keyword>
<keyword id="KW-0443">Lipid metabolism</keyword>
<keyword id="KW-0547">Nucleotide-binding</keyword>
<keyword id="KW-1185">Reference proteome</keyword>
<keyword id="KW-0808">Transferase</keyword>
<feature type="chain" id="PRO_0000223788" description="Acetyl-coenzyme A carboxylase carboxyl transferase subunit alpha">
    <location>
        <begin position="1"/>
        <end position="319"/>
    </location>
</feature>
<feature type="domain" description="CoA carboxyltransferase C-terminal" evidence="2">
    <location>
        <begin position="39"/>
        <end position="293"/>
    </location>
</feature>
<gene>
    <name evidence="1" type="primary">accA</name>
    <name type="ordered locus">NGO_0821</name>
</gene>
<proteinExistence type="inferred from homology"/>
<accession>Q5F8F5</accession>
<comment type="function">
    <text evidence="1">Component of the acetyl coenzyme A carboxylase (ACC) complex. First, biotin carboxylase catalyzes the carboxylation of biotin on its carrier protein (BCCP) and then the CO(2) group is transferred by the carboxyltransferase to acetyl-CoA to form malonyl-CoA.</text>
</comment>
<comment type="catalytic activity">
    <reaction evidence="1">
        <text>N(6)-carboxybiotinyl-L-lysyl-[protein] + acetyl-CoA = N(6)-biotinyl-L-lysyl-[protein] + malonyl-CoA</text>
        <dbReference type="Rhea" id="RHEA:54728"/>
        <dbReference type="Rhea" id="RHEA-COMP:10505"/>
        <dbReference type="Rhea" id="RHEA-COMP:10506"/>
        <dbReference type="ChEBI" id="CHEBI:57288"/>
        <dbReference type="ChEBI" id="CHEBI:57384"/>
        <dbReference type="ChEBI" id="CHEBI:83144"/>
        <dbReference type="ChEBI" id="CHEBI:83145"/>
        <dbReference type="EC" id="2.1.3.15"/>
    </reaction>
</comment>
<comment type="pathway">
    <text evidence="1">Lipid metabolism; malonyl-CoA biosynthesis; malonyl-CoA from acetyl-CoA: step 1/1.</text>
</comment>
<comment type="subunit">
    <text evidence="1">Acetyl-CoA carboxylase is a heterohexamer composed of biotin carboxyl carrier protein (AccB), biotin carboxylase (AccC) and two subunits each of ACCase subunit alpha (AccA) and ACCase subunit beta (AccD).</text>
</comment>
<comment type="subcellular location">
    <subcellularLocation>
        <location evidence="1">Cytoplasm</location>
    </subcellularLocation>
</comment>
<comment type="similarity">
    <text evidence="1">Belongs to the AccA family.</text>
</comment>
<evidence type="ECO:0000255" key="1">
    <source>
        <dbReference type="HAMAP-Rule" id="MF_00823"/>
    </source>
</evidence>
<evidence type="ECO:0000255" key="2">
    <source>
        <dbReference type="PROSITE-ProRule" id="PRU01137"/>
    </source>
</evidence>
<organism>
    <name type="scientific">Neisseria gonorrhoeae (strain ATCC 700825 / FA 1090)</name>
    <dbReference type="NCBI Taxonomy" id="242231"/>
    <lineage>
        <taxon>Bacteria</taxon>
        <taxon>Pseudomonadati</taxon>
        <taxon>Pseudomonadota</taxon>
        <taxon>Betaproteobacteria</taxon>
        <taxon>Neisseriales</taxon>
        <taxon>Neisseriaceae</taxon>
        <taxon>Neisseria</taxon>
    </lineage>
</organism>
<dbReference type="EC" id="2.1.3.15" evidence="1"/>
<dbReference type="EMBL" id="AE004969">
    <property type="protein sequence ID" value="AAW89532.1"/>
    <property type="molecule type" value="Genomic_DNA"/>
</dbReference>
<dbReference type="RefSeq" id="WP_003691155.1">
    <property type="nucleotide sequence ID" value="NC_002946.2"/>
</dbReference>
<dbReference type="RefSeq" id="YP_207944.1">
    <property type="nucleotide sequence ID" value="NC_002946.2"/>
</dbReference>
<dbReference type="SMR" id="Q5F8F5"/>
<dbReference type="STRING" id="242231.NGO_0821"/>
<dbReference type="KEGG" id="ngo:NGO_0821"/>
<dbReference type="PATRIC" id="fig|242231.10.peg.968"/>
<dbReference type="HOGENOM" id="CLU_015486_0_2_4"/>
<dbReference type="UniPathway" id="UPA00655">
    <property type="reaction ID" value="UER00711"/>
</dbReference>
<dbReference type="Proteomes" id="UP000000535">
    <property type="component" value="Chromosome"/>
</dbReference>
<dbReference type="GO" id="GO:0009317">
    <property type="term" value="C:acetyl-CoA carboxylase complex"/>
    <property type="evidence" value="ECO:0007669"/>
    <property type="project" value="InterPro"/>
</dbReference>
<dbReference type="GO" id="GO:0003989">
    <property type="term" value="F:acetyl-CoA carboxylase activity"/>
    <property type="evidence" value="ECO:0007669"/>
    <property type="project" value="InterPro"/>
</dbReference>
<dbReference type="GO" id="GO:0005524">
    <property type="term" value="F:ATP binding"/>
    <property type="evidence" value="ECO:0007669"/>
    <property type="project" value="UniProtKB-KW"/>
</dbReference>
<dbReference type="GO" id="GO:0016743">
    <property type="term" value="F:carboxyl- or carbamoyltransferase activity"/>
    <property type="evidence" value="ECO:0007669"/>
    <property type="project" value="UniProtKB-UniRule"/>
</dbReference>
<dbReference type="GO" id="GO:0006633">
    <property type="term" value="P:fatty acid biosynthetic process"/>
    <property type="evidence" value="ECO:0007669"/>
    <property type="project" value="UniProtKB-KW"/>
</dbReference>
<dbReference type="GO" id="GO:2001295">
    <property type="term" value="P:malonyl-CoA biosynthetic process"/>
    <property type="evidence" value="ECO:0007669"/>
    <property type="project" value="UniProtKB-UniRule"/>
</dbReference>
<dbReference type="Gene3D" id="3.90.226.10">
    <property type="entry name" value="2-enoyl-CoA Hydratase, Chain A, domain 1"/>
    <property type="match status" value="1"/>
</dbReference>
<dbReference type="HAMAP" id="MF_00823">
    <property type="entry name" value="AcetylCoA_CT_alpha"/>
    <property type="match status" value="1"/>
</dbReference>
<dbReference type="InterPro" id="IPR001095">
    <property type="entry name" value="Acetyl_CoA_COase_a_su"/>
</dbReference>
<dbReference type="InterPro" id="IPR029045">
    <property type="entry name" value="ClpP/crotonase-like_dom_sf"/>
</dbReference>
<dbReference type="InterPro" id="IPR011763">
    <property type="entry name" value="COA_CT_C"/>
</dbReference>
<dbReference type="NCBIfam" id="TIGR00513">
    <property type="entry name" value="accA"/>
    <property type="match status" value="1"/>
</dbReference>
<dbReference type="NCBIfam" id="NF041504">
    <property type="entry name" value="AccA_sub"/>
    <property type="match status" value="1"/>
</dbReference>
<dbReference type="NCBIfam" id="NF004344">
    <property type="entry name" value="PRK05724.1"/>
    <property type="match status" value="1"/>
</dbReference>
<dbReference type="PANTHER" id="PTHR42853">
    <property type="entry name" value="ACETYL-COENZYME A CARBOXYLASE CARBOXYL TRANSFERASE SUBUNIT ALPHA"/>
    <property type="match status" value="1"/>
</dbReference>
<dbReference type="PANTHER" id="PTHR42853:SF3">
    <property type="entry name" value="ACETYL-COENZYME A CARBOXYLASE CARBOXYL TRANSFERASE SUBUNIT ALPHA, CHLOROPLASTIC"/>
    <property type="match status" value="1"/>
</dbReference>
<dbReference type="Pfam" id="PF03255">
    <property type="entry name" value="ACCA"/>
    <property type="match status" value="1"/>
</dbReference>
<dbReference type="PRINTS" id="PR01069">
    <property type="entry name" value="ACCCTRFRASEA"/>
</dbReference>
<dbReference type="SUPFAM" id="SSF52096">
    <property type="entry name" value="ClpP/crotonase"/>
    <property type="match status" value="1"/>
</dbReference>
<dbReference type="PROSITE" id="PS50989">
    <property type="entry name" value="COA_CT_CTER"/>
    <property type="match status" value="1"/>
</dbReference>
<sequence>MKPVFLDFEQPIAELTNKIDELRFVQDESAVDISDEIHRLQKKSNDLTKSIFSKLTPAQISQVSRHPQRPYTLDYIDALFTDFEELHGDRHFADDHAIVGGLARFNGQSVVVVGHQKGRDTKEKIRRNFGMPRPEGYRKALRLMKTAEKFGLPVMTFIDTPGAYPGIGAEERGQSEAIGKNLYELTRLRVPVLCTVIGEGGSGGALAVAVGDYVNMLQYSTYSVISPEGCASILWKTAEKAADAAQALGITADRLQKLDLVDTVIKEPLGGAHRDFGQTMKNVKAVLEKQLHEAQSIPLADLLSRRFDRIMAYGKFSEQ</sequence>
<name>ACCA_NEIG1</name>